<sequence>MTLKIKCVANYIKEKIPNVLFLCDPEARLQQLTASVPLCEQRKYFKQTNKRLEESMGAMHRKMAKVISGLQSKVLPPMSPKVVTEEEVNRMLTPSEFLKEMSLTTEQKLASTRIICRPQITELLDMGETTHQKFSRVDLDQALFQPFPSEIIFQNYSPCEVYEVPLVLRNNDKIPRMVKVVEESSPYFKIISPKDIGHKVAPGVPSVFRILFTPEENKDYAHMLTCITEREKFIVPVKARGARAILDFPDELNFSTCPVKYNTQKVLLVRNIGNKDSMFHLKTRSPYSVEPTGGILNVGESMQLEVDFEPQTVGSHDGKLIVTYDTGEMVFVCLYGVAIDVNIRLDKNSLIMEKTYISLANQRSITIHNRTNIIAHFQWKVFATEEEEDKEKYKICDGLNKEEKQETSMILEDSVLDPSLRERLSIISRTFENQRKLVQGDSMLFLDHVFTIEPPEGDVWPNSSAEITVYFNPLEAKLYQQTVYCDISGREIRLPLRIRGEGMGPKLHFNFELLDIGKVFIGSAHCYEAILSNKGSIDALFNVIPPTSALGACFVFNPKEGIIEPSGVQAVQISFSSTILGYFEEEFLIDVNGSPEPVKMTIRGCVIGPTFHFNVPALNFGNVSYGFPHTLMCSLNNTSLVPMTFKLRVRGDGEGMSSIPSYSQESDSKQWSGINTEMPTTKPKEFTISPNSGTIRAQGFTAIKVTLCSNTVQKYELALVVDVEGIGEEVLALLITARCVVPKLQLVTTEVDFGRCFLKYPYEKTIQLVNHDDLPGCYKVLPQLYENSPPVLLSSPSPCGVISPHSTVSIPLALETQVIGAHRSIVYISVFGSQEAPLACNIQSIGEGPVIFIHPTQIDFGNIYVLKDTSRILQLSNQSFIPAVFRVRMANKKSLWTVKPSEGAVPAEDDIPLTLTANLDDIVTFKDTVILEIKHSNTYRIPIQATGIGSTIVSDKPFAPELNLGAHFSLDTHYYRFKLTNKGRRVQQLFWMNDDFRPKEKQSKKEPGKKGSTSSSRRQSKASQEPTDNGNPVFQLYPVRMELYPGQTIDVILEGYSATPKKVKEKLVCQAIVGTQKGKSLLMSVNIICEFIAPIIQLSAKQLLYRLEKKPNSNLESDYQSLVIKNITTLPVNMLLSTTRPFFICETDKSLLPATPKPIKLEVDEEKHLLIKFDPSYRNDLNNWVAEEVLSIKYLEHPQVDNLGLRAEVHYPNLSFEVMDIDFGCILNDTEVIRYIMITNCSPLVVKFRWFFLVDEEENQIRFAPCMKPYSAFLSQMESIAATSVTASSLAAPHTVEYTEMDFSDSIKTILMDDEAGPEEIKKPATSTMVSEAIKYSSAGTERSQSQPDYPECMWIYEQDEMLSIGIEEVFDILPLYGVLRPYSSHQISFTFYGHCDIIARAKALCEVEGGPTYEVLLKGEASLVNYSFDTKDINYGLQLFDHVTEREITLKNTGKVGFEFNVLSNYRSSQRNLLPGVPLILPLSGFIQSNKEQVLKVYYLPGIPEVFQRNFQIQIAHLVPENITLYGEGIFPRISLDLHRNLQGNEKYEHFLEQAKKNVEKEYTKYEAVDQYEVMAEELPEEETAEISAHVQMEVERLIVQDYALEHQRSISNNTEDIYFSQRSCRKLTKVQLPEYILDFGYIVLGDVRTHIVKITNTSHFPVSFHAEKQVLHETGFSTELDRVKNLPYYETETFEVRCDPQGANLPVGNKEVILPIKVYGGPTIHLCLQATVIIPSMTLSCNKIEFATIQCGQCMVETIQLSNHLQVPCEWFVHTPKSTNKLDKHMPKYLRRKLQAEMIPKSRIFEIQPTSGILDPGERANVQVKFMPKEEKLYSQSLLFQIGQSSQKLTLLAQGQGLEPRLEFSPSVLELGPLLPFASGDEAEVIVRNPCNFPIEFYSLEFDQQYLLEEKMLRQLKGYDSYNTLLLPPRNPGEKLPPEVYDYFKEMKKSKEEHMKAKYMENLENEEEEMNTSDQGTTSTKRTSISRGISVTSNLEERHLTIEAKNYLDEDDYEESLEKLTFQTDKMQSTDSHSVEEVGEVESNPVSKAIARHLGIDISAEGRLAKNRKGIAIIVHGTPLSGKTANAISMAKFYNAACLNIDSIVLEALSDTNNILGIRARELCIRAAIEQSMREAEESAHESSMTQNTVVPARLSTENLGRFTSELTLITQEYKVPKTVRGSVMLPKGKADSHFTGSQKQHHQHQSETPQVQISSSPLLPGPTHRRLSVSASIGGETGLMSCVLPDDLLIQILAERIQLSNCFRGVVFDGLDTLFARNAPSALHCLLKAIGSREHIYVINMSQDYVVMKAQEKAKKEQEENKRKEALAKEKERLQTLDEDEYDALTAEEKVAFDRDVRQALRERKKRELERLAKEMQEKKLQQELERQKEEDELKRKVKRPKAGPAAKEEPPLKKAQGATNKQLAAVAKIELKMESIERKVSVREHATLEETTRKKKAMTEYPLLIPISQEQEDSEGDFLKDSDKNLAQKFKIYDMCLKDVQNILMYWDRKQGMMVPHTGTDEMSHEADDQRQAPSGGGGRKGRKDRERERLEKERAEKERLEREKAERERLEKLKALEERSDVEGEGEEEHEGKKDLGVPFINIQSPDFEGVSWKQALESDKLPKGDQILDILGLGSSGPPIPPPVLFSIISYPAKRQSLVATEILKHFVFVIPPNDDIPLMDEKKDPEGDSDIFLNTIITKAQEEQPSPPKGSKQKLKDKPEQVRETQKEKRRTYSSRKGLPGGTSGSIVPMSDIDQNSFDGEHSQEKFIRLNHFRWIVPPNGEVTLRVHFSSLDVGNYDQTFNFELLGTRRQYQLYCRGVCTYPYICRDPKVVFSQRKKDMKLKEVVVKKYVVSMEKFYFGPLLCGKSRDKYKSSLFPGNMETLTILNDSPMVVEAYFCFQHDIKASTYFLEPVNMTLKPNEKQALNVWAYPTAVGIFEDSIVCCIKENPEPAIFKLSCQGIRPEIEVEPRQLHFDRLLLHRKETKIVILRNVTPLPVAWRISNLEHLGEDFTVSMMQGTMLPKGEYGLQVHFQPSKPVNIKKAIRIEVLDAENLVGVVQIENILIFAESYDIALDITFPKGAEGGLDFGTLRVMEEVKQTLQLKNRGKYEIIFSFTVDTLGVLPTNLSSMISVQPKRGTLASIDKPTTVQVFFRARKEVKIDCQPILRCQIIEPTLPEGEIIASIPIKFSVNAVYSKFTISPSSIINFGALICGTRKSITFTIENQGIIDFKYALYRLTGESPILQKKITSHMRHGRTRESESFYKPGATKMAKFSDTVQKDTNIANQARFTHGMFTVYPGFGSIPSGGQQVITIECFADPVGRCEEFLAIDISDRDPRENPAGIPYTLLAEACLPAFVTDNNILIFEEHQICTSPNLYHILQTIQSGGLFVEDENKFIFCNVLVGHQAKARFKISNVGKISCDINIVIKPISNKPANRITDTFDVEPSKMCIGSRSHAFVTVLFTPQTMQTYQCIFEATLDGLPSNIARSRGLVFDIVGEGTLPRVTVIRPTLYNQHGNPLLLFKRLLLGHSEKLPLILKNNGTIPAQLHVDLRDQLGVFSLKGRPTTSYIYIMEENKPNEKVKKAHTASLVVSPGDTAEFDVFFHSNKIGRMTGTIHLSVINNQYEETMIHLVGESYEDDITLDNIHGLISSTSQESSDKSEVIEIAEESTMEDLVTAALMEHIQFGYCHIGISYNVSFTITNHSQVNVIRFEWPLLATLSFSPQIGHLHPGCSKDVVVTLKSESPITLKKMCVKCKLSKIMFQLPVDQVPDWDDRMRTVKWVDAPRNTPLTLNTKRKVIEMDPEPAHSVVEENYRELRIQFSANVDFASYQCETTEVFFKETLVYQTRVFEFDLVNTGQVLLEFCWISEEASKAVSFAMPERQGSSQKELSQGSGSSLDSALDRWTEASPSPFSVEPPSGVVPVGKTQKLKVKFSPMDIGEFESSLYCQIPNLPLGEQGPILITKGRSVLPFCHFDLKESDYISGHRRNPELRGPGAGPLEPNTRVIEFTSVGIGGKNVQTFTILNPTNSTYSFCWTSEETESLQHPPAFVCLTEKGIIHPEKKAEIIFQFLPAHLDITEEFWTFSIPEHNISVPFLLVGKTTDPLISLDKSHLNFSSLLIGREARETVKIINKEEQGFNFAFQDNSRYSEGFNNSLIVCPMEGWIPPLSRFPVDIFFTPKQEGDVNFNLICNIKKKAHPLTLNVKAEGYTMNAEVKCRDRMGTTILLTSTQVNTINFYEVELNECVQCEFSFINTGKFNFSYQAELSGPKLLLQYLDFTPTDSSVDVGQSEPANLSFQPYQKCVLKGLELKIKISHGPTFVCNILGCAVSPAVHFSFTSHNFGTCFIYQAGMPPYKQILVVTNKEETSMSLDCLYTNTPHIEVNFNVDVIKPGKTLEIPITFYPREAISYRELIPFEINGLSQQTVEIKGKGTEMKLLVLDPANRIVKLGAVLPGQVVRKTVSLVNNSLAQLTFNHSVLFSIPELQEAKVITLEPFHTITMKPKEVCKLEITFAPKKRVPPFSEEVFMEWMGLLRPLFLLSGCCQALEISLDQEHLPFGPVVYQTQATRRILIMNTGDVGARFKWDVKKLKPHFSISPEEGYIISGTEVALEVTYHPTEIGKESLYKNILCFIQGGNPLCLTLSGTCVGPPVVKEVVNFNCQVRSRHTQTILLSNRSNQTWNLHPIFEGEHWEGPEFITLEAHQQNKPYEITYKPRTMNLENRKHQGTLFFPLPDGTGWLYALHGTAELPKAVANIYREVPCKTPYTELLPISNWLNKPQRFRVIVEILKPEKTDLSVTLKGLDYIDVLSGSKKDYKLNFFSYKEGLYTAKVIFRNEVTNEFLYYTVSFRVTPSGIIKTIQMTSPVRQSVSASIKLENPLPYSVTFSTECKLSDISLPSQFAVPPNSEGTFSFEFQPLKAGELCGRLTLHNSDLGYYQYELALKALPAPPEKPVHFQTVLGSSQSILAKFTNYTRLKTEYYCKTDCSDFHTEKVINAAPGAQGGTEVSVEVFFEPSHLGETKGILCLSSLIGGEYIIPLFGIALPPKPQGPFLIRAGYNIIIPFKNVFLHATSFSFIVENPAFSIRAAETVRPKKINNITVYFEGNPSGSKTPITSKLIVTCPQCEGTESGIKWVYYLKGITP</sequence>
<comment type="function">
    <text evidence="5">Required for ciliary motility.</text>
</comment>
<comment type="subunit">
    <text evidence="7">Interacts with KIF9.</text>
</comment>
<comment type="subcellular location">
    <subcellularLocation>
        <location evidence="9">Cell projection</location>
        <location evidence="9">Cilium</location>
    </subcellularLocation>
    <subcellularLocation>
        <location evidence="6">Cytoplasm</location>
        <location evidence="6">Cytoskeleton</location>
        <location evidence="6">Cilium axoneme</location>
    </subcellularLocation>
    <subcellularLocation>
        <location evidence="1">Cell projection</location>
        <location evidence="1">Cilium</location>
        <location evidence="1">Flagellum</location>
    </subcellularLocation>
    <text evidence="6">Localizes in the cilium axoneme in a SPEF1-dependent manner.</text>
</comment>
<comment type="alternative products">
    <event type="alternative splicing"/>
    <isoform>
        <id>Q80W93-1</id>
        <name>1</name>
        <sequence type="displayed"/>
    </isoform>
    <isoform>
        <id>Q80W93-2</id>
        <name>2</name>
        <sequence type="described" ref="VSP_024701 VSP_024702"/>
    </isoform>
    <isoform>
        <id>Q80W93-3</id>
        <name>3</name>
        <sequence type="described" ref="VSP_040915 VSP_040916 VSP_040917"/>
    </isoform>
</comment>
<comment type="tissue specificity">
    <text evidence="4">Expressed in brain and testis. Expressed in ciliated epithelial cells lining bronchi and oviduct, and in spermatocytes.</text>
</comment>
<comment type="developmental stage">
    <text evidence="4">At 15 dpc, expressed in developing choroid plexus. At P0, brain expression is limited to the ciliated ependymal cells.</text>
</comment>
<comment type="disease">
    <text evidence="4 5">Defects in Hydin are the cause of spontaneous hydrocephalus 3, a lethal communicating hydrocephalus with perinatal onset. There is lethality in the first weeks of life because of hydrocephalus caused by abnormal ependymal ciliary motility. Cilia are unable to bend normally, ciliary beat frequency is reduced, and the cilia tend to stall. As a result, these cilia are incapable of generating fluid flow. Similar defects are observed for cilia in trachea. Mice do not exhibit randomization of left-right body asymmetry or situs inversus.</text>
</comment>
<comment type="caution">
    <text evidence="9">It is uncertain whether Met-1 or Met-56 is the initiator.</text>
</comment>
<comment type="sequence caution" evidence="9">
    <conflict type="erroneous initiation">
        <sequence resource="EMBL-CDS" id="AAO44953"/>
    </conflict>
    <text>Truncated N-terminus.</text>
</comment>
<comment type="sequence caution" evidence="9">
    <conflict type="erroneous initiation">
        <sequence resource="EMBL-CDS" id="BAC26807"/>
    </conflict>
    <text>Truncated N-terminus.</text>
</comment>
<comment type="sequence caution" evidence="9">
    <conflict type="miscellaneous discrepancy">
        <sequence resource="EMBL" id="BB664150"/>
    </conflict>
    <text>Contaminating sequence. Sequence of unknown origin in the C-terminal part.</text>
</comment>
<accession>Q80W93</accession>
<accession>Q3UQ06</accession>
<accession>Q68ED1</accession>
<accession>Q8BRL9</accession>
<accession>Q8CDF4</accession>
<reference key="1">
    <citation type="journal article" date="2003" name="Hum. Mol. Genet.">
        <title>Congenital hydrocephalus in hy3 mice is caused by a frameshift mutation in Hydin, a large novel gene.</title>
        <authorList>
            <person name="Davy B.E."/>
            <person name="Robinson M.L."/>
        </authorList>
    </citation>
    <scope>NUCLEOTIDE SEQUENCE [MRNA] (ISOFORM 1)</scope>
    <scope>TISSUE SPECIFICITY</scope>
    <scope>DISEASE</scope>
    <scope>DEVELOPMENTAL STAGE</scope>
    <source>
        <strain>C57BL/6J</strain>
    </source>
</reference>
<reference key="2">
    <citation type="journal article" date="2005" name="Science">
        <title>The transcriptional landscape of the mammalian genome.</title>
        <authorList>
            <person name="Carninci P."/>
            <person name="Kasukawa T."/>
            <person name="Katayama S."/>
            <person name="Gough J."/>
            <person name="Frith M.C."/>
            <person name="Maeda N."/>
            <person name="Oyama R."/>
            <person name="Ravasi T."/>
            <person name="Lenhard B."/>
            <person name="Wells C."/>
            <person name="Kodzius R."/>
            <person name="Shimokawa K."/>
            <person name="Bajic V.B."/>
            <person name="Brenner S.E."/>
            <person name="Batalov S."/>
            <person name="Forrest A.R."/>
            <person name="Zavolan M."/>
            <person name="Davis M.J."/>
            <person name="Wilming L.G."/>
            <person name="Aidinis V."/>
            <person name="Allen J.E."/>
            <person name="Ambesi-Impiombato A."/>
            <person name="Apweiler R."/>
            <person name="Aturaliya R.N."/>
            <person name="Bailey T.L."/>
            <person name="Bansal M."/>
            <person name="Baxter L."/>
            <person name="Beisel K.W."/>
            <person name="Bersano T."/>
            <person name="Bono H."/>
            <person name="Chalk A.M."/>
            <person name="Chiu K.P."/>
            <person name="Choudhary V."/>
            <person name="Christoffels A."/>
            <person name="Clutterbuck D.R."/>
            <person name="Crowe M.L."/>
            <person name="Dalla E."/>
            <person name="Dalrymple B.P."/>
            <person name="de Bono B."/>
            <person name="Della Gatta G."/>
            <person name="di Bernardo D."/>
            <person name="Down T."/>
            <person name="Engstrom P."/>
            <person name="Fagiolini M."/>
            <person name="Faulkner G."/>
            <person name="Fletcher C.F."/>
            <person name="Fukushima T."/>
            <person name="Furuno M."/>
            <person name="Futaki S."/>
            <person name="Gariboldi M."/>
            <person name="Georgii-Hemming P."/>
            <person name="Gingeras T.R."/>
            <person name="Gojobori T."/>
            <person name="Green R.E."/>
            <person name="Gustincich S."/>
            <person name="Harbers M."/>
            <person name="Hayashi Y."/>
            <person name="Hensch T.K."/>
            <person name="Hirokawa N."/>
            <person name="Hill D."/>
            <person name="Huminiecki L."/>
            <person name="Iacono M."/>
            <person name="Ikeo K."/>
            <person name="Iwama A."/>
            <person name="Ishikawa T."/>
            <person name="Jakt M."/>
            <person name="Kanapin A."/>
            <person name="Katoh M."/>
            <person name="Kawasawa Y."/>
            <person name="Kelso J."/>
            <person name="Kitamura H."/>
            <person name="Kitano H."/>
            <person name="Kollias G."/>
            <person name="Krishnan S.P."/>
            <person name="Kruger A."/>
            <person name="Kummerfeld S.K."/>
            <person name="Kurochkin I.V."/>
            <person name="Lareau L.F."/>
            <person name="Lazarevic D."/>
            <person name="Lipovich L."/>
            <person name="Liu J."/>
            <person name="Liuni S."/>
            <person name="McWilliam S."/>
            <person name="Madan Babu M."/>
            <person name="Madera M."/>
            <person name="Marchionni L."/>
            <person name="Matsuda H."/>
            <person name="Matsuzawa S."/>
            <person name="Miki H."/>
            <person name="Mignone F."/>
            <person name="Miyake S."/>
            <person name="Morris K."/>
            <person name="Mottagui-Tabar S."/>
            <person name="Mulder N."/>
            <person name="Nakano N."/>
            <person name="Nakauchi H."/>
            <person name="Ng P."/>
            <person name="Nilsson R."/>
            <person name="Nishiguchi S."/>
            <person name="Nishikawa S."/>
            <person name="Nori F."/>
            <person name="Ohara O."/>
            <person name="Okazaki Y."/>
            <person name="Orlando V."/>
            <person name="Pang K.C."/>
            <person name="Pavan W.J."/>
            <person name="Pavesi G."/>
            <person name="Pesole G."/>
            <person name="Petrovsky N."/>
            <person name="Piazza S."/>
            <person name="Reed J."/>
            <person name="Reid J.F."/>
            <person name="Ring B.Z."/>
            <person name="Ringwald M."/>
            <person name="Rost B."/>
            <person name="Ruan Y."/>
            <person name="Salzberg S.L."/>
            <person name="Sandelin A."/>
            <person name="Schneider C."/>
            <person name="Schoenbach C."/>
            <person name="Sekiguchi K."/>
            <person name="Semple C.A."/>
            <person name="Seno S."/>
            <person name="Sessa L."/>
            <person name="Sheng Y."/>
            <person name="Shibata Y."/>
            <person name="Shimada H."/>
            <person name="Shimada K."/>
            <person name="Silva D."/>
            <person name="Sinclair B."/>
            <person name="Sperling S."/>
            <person name="Stupka E."/>
            <person name="Sugiura K."/>
            <person name="Sultana R."/>
            <person name="Takenaka Y."/>
            <person name="Taki K."/>
            <person name="Tammoja K."/>
            <person name="Tan S.L."/>
            <person name="Tang S."/>
            <person name="Taylor M.S."/>
            <person name="Tegner J."/>
            <person name="Teichmann S.A."/>
            <person name="Ueda H.R."/>
            <person name="van Nimwegen E."/>
            <person name="Verardo R."/>
            <person name="Wei C.L."/>
            <person name="Yagi K."/>
            <person name="Yamanishi H."/>
            <person name="Zabarovsky E."/>
            <person name="Zhu S."/>
            <person name="Zimmer A."/>
            <person name="Hide W."/>
            <person name="Bult C."/>
            <person name="Grimmond S.M."/>
            <person name="Teasdale R.D."/>
            <person name="Liu E.T."/>
            <person name="Brusic V."/>
            <person name="Quackenbush J."/>
            <person name="Wahlestedt C."/>
            <person name="Mattick J.S."/>
            <person name="Hume D.A."/>
            <person name="Kai C."/>
            <person name="Sasaki D."/>
            <person name="Tomaru Y."/>
            <person name="Fukuda S."/>
            <person name="Kanamori-Katayama M."/>
            <person name="Suzuki M."/>
            <person name="Aoki J."/>
            <person name="Arakawa T."/>
            <person name="Iida J."/>
            <person name="Imamura K."/>
            <person name="Itoh M."/>
            <person name="Kato T."/>
            <person name="Kawaji H."/>
            <person name="Kawagashira N."/>
            <person name="Kawashima T."/>
            <person name="Kojima M."/>
            <person name="Kondo S."/>
            <person name="Konno H."/>
            <person name="Nakano K."/>
            <person name="Ninomiya N."/>
            <person name="Nishio T."/>
            <person name="Okada M."/>
            <person name="Plessy C."/>
            <person name="Shibata K."/>
            <person name="Shiraki T."/>
            <person name="Suzuki S."/>
            <person name="Tagami M."/>
            <person name="Waki K."/>
            <person name="Watahiki A."/>
            <person name="Okamura-Oho Y."/>
            <person name="Suzuki H."/>
            <person name="Kawai J."/>
            <person name="Hayashizaki Y."/>
        </authorList>
    </citation>
    <scope>NUCLEOTIDE SEQUENCE [LARGE SCALE MRNA] (ISOFORMS 2 AND 3)</scope>
    <scope>NUCLEOTIDE SEQUENCE [LARGE SCALE MRNA] OF 1-113 AND 4193-5154 (ISOFORM 1)</scope>
    <source>
        <strain>C57BL/6J</strain>
        <tissue>Brain cortex</tissue>
        <tissue>Lung</tissue>
        <tissue>Testis</tissue>
    </source>
</reference>
<reference key="3">
    <citation type="journal article" date="2004" name="Genome Res.">
        <title>The status, quality, and expansion of the NIH full-length cDNA project: the Mammalian Gene Collection (MGC).</title>
        <authorList>
            <consortium name="The MGC Project Team"/>
        </authorList>
    </citation>
    <scope>NUCLEOTIDE SEQUENCE [LARGE SCALE MRNA] OF 4014-5154 (ISOFORM 1)</scope>
    <source>
        <strain>C57BL/6J</strain>
        <tissue>Brain</tissue>
    </source>
</reference>
<reference key="4">
    <citation type="journal article" date="2007" name="J. Cell Biol.">
        <title>Hydin seek: finding a function in ciliary motility.</title>
        <authorList>
            <person name="Smith E.F."/>
        </authorList>
    </citation>
    <scope>REVIEW</scope>
</reference>
<reference key="5">
    <citation type="journal article" date="2008" name="J. Cell Biol.">
        <title>Mutations in Hydin impair ciliary motility in mice.</title>
        <authorList>
            <person name="Lechtreck K.F."/>
            <person name="Delmotte P."/>
            <person name="Robinson M.L."/>
            <person name="Sanderson M.J."/>
            <person name="Witman G.B."/>
        </authorList>
    </citation>
    <scope>FUNCTION</scope>
    <scope>DISEASE</scope>
</reference>
<reference key="6">
    <citation type="journal article" date="2010" name="Cell">
        <title>A tissue-specific atlas of mouse protein phosphorylation and expression.</title>
        <authorList>
            <person name="Huttlin E.L."/>
            <person name="Jedrychowski M.P."/>
            <person name="Elias J.E."/>
            <person name="Goswami T."/>
            <person name="Rad R."/>
            <person name="Beausoleil S.A."/>
            <person name="Villen J."/>
            <person name="Haas W."/>
            <person name="Sowa M.E."/>
            <person name="Gygi S.P."/>
        </authorList>
    </citation>
    <scope>IDENTIFICATION BY MASS SPECTROMETRY [LARGE SCALE ANALYSIS]</scope>
    <source>
        <tissue>Testis</tissue>
    </source>
</reference>
<reference key="7">
    <citation type="journal article" date="2019" name="J. Mol. Cell Biol.">
        <title>Microtubule-bundling protein Spef1 enables mammalian ciliary central apparatus formation.</title>
        <authorList>
            <person name="Zheng J."/>
            <person name="Liu H."/>
            <person name="Zhu L."/>
            <person name="Chen Y."/>
            <person name="Zhao H."/>
            <person name="Zhang W."/>
            <person name="Li F."/>
            <person name="Xie L."/>
            <person name="Yan X."/>
            <person name="Zhu X."/>
        </authorList>
    </citation>
    <scope>SUBCELLULAR LOCATION</scope>
</reference>
<reference key="8">
    <citation type="journal article" date="2020" name="FASEB J.">
        <title>Testis-enriched kinesin KIF9 is important for progressive motility in mouse spermatozoa.</title>
        <authorList>
            <person name="Miyata H."/>
            <person name="Shimada K."/>
            <person name="Morohoshi A."/>
            <person name="Oura S."/>
            <person name="Matsumura T."/>
            <person name="Xu Z."/>
            <person name="Oyama Y."/>
            <person name="Ikawa M."/>
        </authorList>
    </citation>
    <scope>INTERACTION WITH KIF9</scope>
</reference>
<evidence type="ECO:0000250" key="1">
    <source>
        <dbReference type="UniProtKB" id="Q4G0P3"/>
    </source>
</evidence>
<evidence type="ECO:0000255" key="2"/>
<evidence type="ECO:0000256" key="3">
    <source>
        <dbReference type="SAM" id="MobiDB-lite"/>
    </source>
</evidence>
<evidence type="ECO:0000269" key="4">
    <source>
    </source>
</evidence>
<evidence type="ECO:0000269" key="5">
    <source>
    </source>
</evidence>
<evidence type="ECO:0000269" key="6">
    <source>
    </source>
</evidence>
<evidence type="ECO:0000269" key="7">
    <source>
    </source>
</evidence>
<evidence type="ECO:0000303" key="8">
    <source>
    </source>
</evidence>
<evidence type="ECO:0000305" key="9"/>
<proteinExistence type="evidence at protein level"/>
<feature type="chain" id="PRO_0000284845" description="Hydrocephalus-inducing protein">
    <location>
        <begin position="1"/>
        <end position="5154"/>
    </location>
</feature>
<feature type="region of interest" description="Interaction with KIF9" evidence="7">
    <location>
        <begin position="409"/>
        <end position="800"/>
    </location>
</feature>
<feature type="region of interest" description="Disordered" evidence="3">
    <location>
        <begin position="997"/>
        <end position="1033"/>
    </location>
</feature>
<feature type="region of interest" description="Disordered" evidence="3">
    <location>
        <begin position="1966"/>
        <end position="1988"/>
    </location>
</feature>
<feature type="region of interest" description="Disordered" evidence="3">
    <location>
        <begin position="2193"/>
        <end position="2222"/>
    </location>
</feature>
<feature type="region of interest" description="Disordered" evidence="3">
    <location>
        <begin position="2383"/>
        <end position="2423"/>
    </location>
</feature>
<feature type="region of interest" description="Disordered" evidence="3">
    <location>
        <begin position="2521"/>
        <end position="2572"/>
    </location>
</feature>
<feature type="region of interest" description="Disordered" evidence="3">
    <location>
        <begin position="2706"/>
        <end position="2762"/>
    </location>
</feature>
<feature type="coiled-coil region" evidence="2">
    <location>
        <begin position="1948"/>
        <end position="1977"/>
    </location>
</feature>
<feature type="coiled-coil region" evidence="2">
    <location>
        <begin position="2308"/>
        <end position="2444"/>
    </location>
</feature>
<feature type="coiled-coil region" evidence="2">
    <location>
        <begin position="2543"/>
        <end position="2588"/>
    </location>
</feature>
<feature type="compositionally biased region" description="Basic and acidic residues" evidence="3">
    <location>
        <begin position="997"/>
        <end position="1009"/>
    </location>
</feature>
<feature type="compositionally biased region" description="Low complexity" evidence="3">
    <location>
        <begin position="1010"/>
        <end position="1024"/>
    </location>
</feature>
<feature type="compositionally biased region" description="Polar residues" evidence="3">
    <location>
        <begin position="1974"/>
        <end position="1988"/>
    </location>
</feature>
<feature type="compositionally biased region" description="Polar residues" evidence="3">
    <location>
        <begin position="2209"/>
        <end position="2220"/>
    </location>
</feature>
<feature type="compositionally biased region" description="Basic and acidic residues" evidence="3">
    <location>
        <begin position="2383"/>
        <end position="2398"/>
    </location>
</feature>
<feature type="compositionally biased region" description="Basic and acidic residues" evidence="3">
    <location>
        <begin position="2523"/>
        <end position="2535"/>
    </location>
</feature>
<feature type="compositionally biased region" description="Basic and acidic residues" evidence="3">
    <location>
        <begin position="2548"/>
        <end position="2572"/>
    </location>
</feature>
<feature type="compositionally biased region" description="Basic and acidic residues" evidence="3">
    <location>
        <begin position="2721"/>
        <end position="2734"/>
    </location>
</feature>
<feature type="splice variant" id="VSP_040915" description="In isoform 3." evidence="8">
    <original>MTLKIKCVANYIKEKIPNVLFLCDPEARLQQLTASVPL</original>
    <variation>MDSAVQQKVARKKCRD</variation>
    <location>
        <begin position="1"/>
        <end position="38"/>
    </location>
</feature>
<feature type="splice variant" id="VSP_040916" description="In isoform 3." evidence="8">
    <original>GREIRLPLRIRGE</original>
    <variation>VRSTEDGILGPLQ</variation>
    <location>
        <begin position="489"/>
        <end position="501"/>
    </location>
</feature>
<feature type="splice variant" id="VSP_040917" description="In isoform 3." evidence="8">
    <location>
        <begin position="502"/>
        <end position="5154"/>
    </location>
</feature>
<feature type="splice variant" id="VSP_024701" description="In isoform 2." evidence="8">
    <original>A</original>
    <variation>V</variation>
    <location>
        <position position="1333"/>
    </location>
</feature>
<feature type="splice variant" id="VSP_024702" description="In isoform 2." evidence="8">
    <location>
        <begin position="1334"/>
        <end position="5154"/>
    </location>
</feature>
<feature type="sequence conflict" description="In Ref. 2; BB641870." evidence="9" ref="2">
    <original>F</original>
    <variation>S</variation>
    <location>
        <position position="97"/>
    </location>
</feature>
<feature type="sequence conflict" description="In Ref. 2; BB641870." evidence="9" ref="2">
    <original>Q</original>
    <variation>H</variation>
    <location>
        <position position="107"/>
    </location>
</feature>
<feature type="sequence conflict" description="In Ref. 2; BAE25238." evidence="9" ref="2">
    <original>I</original>
    <variation>M</variation>
    <location>
        <position position="190"/>
    </location>
</feature>
<feature type="sequence conflict" description="In Ref. 2; BAE25238." evidence="9" ref="2">
    <original>A</original>
    <variation>T</variation>
    <location>
        <position position="1264"/>
    </location>
</feature>
<feature type="sequence conflict" description="In Ref. 3; AAH80316." evidence="9" ref="3">
    <original>L</original>
    <variation>F</variation>
    <location>
        <position position="4370"/>
    </location>
</feature>
<name>HYDIN_MOUSE</name>
<organism>
    <name type="scientific">Mus musculus</name>
    <name type="common">Mouse</name>
    <dbReference type="NCBI Taxonomy" id="10090"/>
    <lineage>
        <taxon>Eukaryota</taxon>
        <taxon>Metazoa</taxon>
        <taxon>Chordata</taxon>
        <taxon>Craniata</taxon>
        <taxon>Vertebrata</taxon>
        <taxon>Euteleostomi</taxon>
        <taxon>Mammalia</taxon>
        <taxon>Eutheria</taxon>
        <taxon>Euarchontoglires</taxon>
        <taxon>Glires</taxon>
        <taxon>Rodentia</taxon>
        <taxon>Myomorpha</taxon>
        <taxon>Muroidea</taxon>
        <taxon>Muridae</taxon>
        <taxon>Murinae</taxon>
        <taxon>Mus</taxon>
        <taxon>Mus</taxon>
    </lineage>
</organism>
<keyword id="KW-0025">Alternative splicing</keyword>
<keyword id="KW-0966">Cell projection</keyword>
<keyword id="KW-0969">Cilium</keyword>
<keyword id="KW-0175">Coiled coil</keyword>
<keyword id="KW-0963">Cytoplasm</keyword>
<keyword id="KW-0206">Cytoskeleton</keyword>
<keyword id="KW-0282">Flagellum</keyword>
<keyword id="KW-1185">Reference proteome</keyword>
<protein>
    <recommendedName>
        <fullName>Hydrocephalus-inducing protein</fullName>
    </recommendedName>
    <alternativeName>
        <fullName>Protein Hy-3</fullName>
    </alternativeName>
</protein>
<gene>
    <name type="primary">Hydin</name>
    <name type="synonym">Hy3</name>
</gene>
<dbReference type="EMBL" id="AY173049">
    <property type="protein sequence ID" value="AAO44953.1"/>
    <property type="status" value="ALT_INIT"/>
    <property type="molecule type" value="mRNA"/>
</dbReference>
<dbReference type="EMBL" id="AK030144">
    <property type="protein sequence ID" value="BAC26807.1"/>
    <property type="status" value="ALT_INIT"/>
    <property type="molecule type" value="mRNA"/>
</dbReference>
<dbReference type="EMBL" id="AK043971">
    <property type="protein sequence ID" value="BAC31720.1"/>
    <property type="molecule type" value="mRNA"/>
</dbReference>
<dbReference type="EMBL" id="AK142981">
    <property type="protein sequence ID" value="BAE25238.1"/>
    <property type="molecule type" value="mRNA"/>
</dbReference>
<dbReference type="EMBL" id="BB641870">
    <property type="status" value="NOT_ANNOTATED_CDS"/>
    <property type="molecule type" value="mRNA"/>
</dbReference>
<dbReference type="EMBL" id="BB664150">
    <property type="status" value="NOT_ANNOTATED_CDS"/>
    <property type="molecule type" value="mRNA"/>
</dbReference>
<dbReference type="EMBL" id="BC080316">
    <property type="protein sequence ID" value="AAH80316.1"/>
    <property type="molecule type" value="mRNA"/>
</dbReference>
<dbReference type="CCDS" id="CCDS40476.1">
    <molecule id="Q80W93-1"/>
</dbReference>
<dbReference type="RefSeq" id="NP_766504.3">
    <molecule id="Q80W93-1"/>
    <property type="nucleotide sequence ID" value="NM_172916.2"/>
</dbReference>
<dbReference type="SMR" id="Q80W93"/>
<dbReference type="BioGRID" id="232672">
    <property type="interactions" value="4"/>
</dbReference>
<dbReference type="FunCoup" id="Q80W93">
    <property type="interactions" value="63"/>
</dbReference>
<dbReference type="STRING" id="10090.ENSMUSP00000046204"/>
<dbReference type="GlyGen" id="Q80W93">
    <property type="glycosylation" value="4 sites"/>
</dbReference>
<dbReference type="iPTMnet" id="Q80W93"/>
<dbReference type="PhosphoSitePlus" id="Q80W93"/>
<dbReference type="PaxDb" id="10090-ENSMUSP00000046204"/>
<dbReference type="ProteomicsDB" id="273238">
    <molecule id="Q80W93-1"/>
</dbReference>
<dbReference type="ProteomicsDB" id="273239">
    <molecule id="Q80W93-2"/>
</dbReference>
<dbReference type="ProteomicsDB" id="273240">
    <molecule id="Q80W93-3"/>
</dbReference>
<dbReference type="Antibodypedia" id="66504">
    <property type="antibodies" value="39 antibodies from 11 providers"/>
</dbReference>
<dbReference type="DNASU" id="244653"/>
<dbReference type="Ensembl" id="ENSMUST00000043141.7">
    <molecule id="Q80W93-1"/>
    <property type="protein sequence ID" value="ENSMUSP00000046204.7"/>
    <property type="gene ID" value="ENSMUSG00000059854.9"/>
</dbReference>
<dbReference type="GeneID" id="244653"/>
<dbReference type="KEGG" id="mmu:244653"/>
<dbReference type="UCSC" id="uc009nkq.1">
    <molecule id="Q80W93-3"/>
    <property type="organism name" value="mouse"/>
</dbReference>
<dbReference type="UCSC" id="uc009nkr.1">
    <molecule id="Q80W93-2"/>
    <property type="organism name" value="mouse"/>
</dbReference>
<dbReference type="UCSC" id="uc009nks.1">
    <molecule id="Q80W93-1"/>
    <property type="organism name" value="mouse"/>
</dbReference>
<dbReference type="AGR" id="MGI:2389007"/>
<dbReference type="CTD" id="54768"/>
<dbReference type="MGI" id="MGI:2389007">
    <property type="gene designation" value="Hydin"/>
</dbReference>
<dbReference type="VEuPathDB" id="HostDB:ENSMUSG00000059854"/>
<dbReference type="eggNOG" id="ENOG502QQ4F">
    <property type="taxonomic scope" value="Eukaryota"/>
</dbReference>
<dbReference type="GeneTree" id="ENSGT00610000086095"/>
<dbReference type="HOGENOM" id="CLU_000116_1_0_1"/>
<dbReference type="InParanoid" id="Q80W93"/>
<dbReference type="OMA" id="PCEWFVQ"/>
<dbReference type="OrthoDB" id="442692at2759"/>
<dbReference type="PhylomeDB" id="Q80W93"/>
<dbReference type="TreeFam" id="TF328687"/>
<dbReference type="BioGRID-ORCS" id="244653">
    <property type="hits" value="6 hits in 76 CRISPR screens"/>
</dbReference>
<dbReference type="ChiTaRS" id="Hydin">
    <property type="organism name" value="mouse"/>
</dbReference>
<dbReference type="PRO" id="PR:Q80W93"/>
<dbReference type="Proteomes" id="UP000000589">
    <property type="component" value="Chromosome 8"/>
</dbReference>
<dbReference type="RNAct" id="Q80W93">
    <property type="molecule type" value="protein"/>
</dbReference>
<dbReference type="Bgee" id="ENSMUSG00000059854">
    <property type="expression patterns" value="Expressed in spermatid and 27 other cell types or tissues"/>
</dbReference>
<dbReference type="GO" id="GO:1990716">
    <property type="term" value="C:axonemal central apparatus"/>
    <property type="evidence" value="ECO:0000314"/>
    <property type="project" value="UniProtKB"/>
</dbReference>
<dbReference type="GO" id="GO:1990718">
    <property type="term" value="C:axonemal central pair projection"/>
    <property type="evidence" value="ECO:0000315"/>
    <property type="project" value="MGI"/>
</dbReference>
<dbReference type="GO" id="GO:0036126">
    <property type="term" value="C:sperm flagellum"/>
    <property type="evidence" value="ECO:0000250"/>
    <property type="project" value="UniProtKB"/>
</dbReference>
<dbReference type="GO" id="GO:1904158">
    <property type="term" value="P:axonemal central apparatus assembly"/>
    <property type="evidence" value="ECO:0000315"/>
    <property type="project" value="MGI"/>
</dbReference>
<dbReference type="GO" id="GO:0007420">
    <property type="term" value="P:brain development"/>
    <property type="evidence" value="ECO:0000315"/>
    <property type="project" value="MGI"/>
</dbReference>
<dbReference type="GO" id="GO:0003341">
    <property type="term" value="P:cilium movement"/>
    <property type="evidence" value="ECO:0000315"/>
    <property type="project" value="MGI"/>
</dbReference>
<dbReference type="GO" id="GO:0002064">
    <property type="term" value="P:epithelial cell development"/>
    <property type="evidence" value="ECO:0000315"/>
    <property type="project" value="MGI"/>
</dbReference>
<dbReference type="GO" id="GO:0060438">
    <property type="term" value="P:trachea development"/>
    <property type="evidence" value="ECO:0000315"/>
    <property type="project" value="MGI"/>
</dbReference>
<dbReference type="GO" id="GO:0021591">
    <property type="term" value="P:ventricular system development"/>
    <property type="evidence" value="ECO:0000315"/>
    <property type="project" value="MGI"/>
</dbReference>
<dbReference type="Gene3D" id="2.60.40.10">
    <property type="entry name" value="Immunoglobulins"/>
    <property type="match status" value="22"/>
</dbReference>
<dbReference type="Gene3D" id="3.40.50.300">
    <property type="entry name" value="P-loop containing nucleotide triphosphate hydrolases"/>
    <property type="match status" value="1"/>
</dbReference>
<dbReference type="InterPro" id="IPR033305">
    <property type="entry name" value="Hydin-like"/>
</dbReference>
<dbReference type="InterPro" id="IPR033768">
    <property type="entry name" value="Hydin_ADK"/>
</dbReference>
<dbReference type="InterPro" id="IPR053879">
    <property type="entry name" value="HYDIN_VesB_CFA65-like_Ig"/>
</dbReference>
<dbReference type="InterPro" id="IPR013783">
    <property type="entry name" value="Ig-like_fold"/>
</dbReference>
<dbReference type="InterPro" id="IPR027417">
    <property type="entry name" value="P-loop_NTPase"/>
</dbReference>
<dbReference type="InterPro" id="IPR008962">
    <property type="entry name" value="PapD-like_sf"/>
</dbReference>
<dbReference type="PANTHER" id="PTHR23053">
    <property type="entry name" value="DLEC1 DELETED IN LUNG AND ESOPHAGEAL CANCER 1"/>
    <property type="match status" value="1"/>
</dbReference>
<dbReference type="PANTHER" id="PTHR23053:SF0">
    <property type="entry name" value="HYDROCEPHALUS-INDUCING PROTEIN HOMOLOG"/>
    <property type="match status" value="1"/>
</dbReference>
<dbReference type="Pfam" id="PF17213">
    <property type="entry name" value="Hydin_ADK"/>
    <property type="match status" value="1"/>
</dbReference>
<dbReference type="Pfam" id="PF22544">
    <property type="entry name" value="HYDIN_VesB_CFA65-like_Ig"/>
    <property type="match status" value="2"/>
</dbReference>
<dbReference type="Pfam" id="PF24507">
    <property type="entry name" value="Ig_CFAP65_4th"/>
    <property type="match status" value="6"/>
</dbReference>
<dbReference type="Pfam" id="PF24816">
    <property type="entry name" value="Ig_CFAP65__9th"/>
    <property type="match status" value="1"/>
</dbReference>
<dbReference type="SUPFAM" id="SSF49354">
    <property type="entry name" value="PapD-like"/>
    <property type="match status" value="1"/>
</dbReference>